<feature type="chain" id="PRO_1000122039" description="Exodeoxyribonuclease 7 large subunit">
    <location>
        <begin position="1"/>
        <end position="452"/>
    </location>
</feature>
<organism>
    <name type="scientific">Bacillus cereus (strain G9842)</name>
    <dbReference type="NCBI Taxonomy" id="405531"/>
    <lineage>
        <taxon>Bacteria</taxon>
        <taxon>Bacillati</taxon>
        <taxon>Bacillota</taxon>
        <taxon>Bacilli</taxon>
        <taxon>Bacillales</taxon>
        <taxon>Bacillaceae</taxon>
        <taxon>Bacillus</taxon>
        <taxon>Bacillus cereus group</taxon>
    </lineage>
</organism>
<protein>
    <recommendedName>
        <fullName evidence="1">Exodeoxyribonuclease 7 large subunit</fullName>
        <ecNumber evidence="1">3.1.11.6</ecNumber>
    </recommendedName>
    <alternativeName>
        <fullName evidence="1">Exodeoxyribonuclease VII large subunit</fullName>
        <shortName evidence="1">Exonuclease VII large subunit</shortName>
    </alternativeName>
</protein>
<proteinExistence type="inferred from homology"/>
<reference key="1">
    <citation type="submission" date="2008-10" db="EMBL/GenBank/DDBJ databases">
        <title>Genome sequence of Bacillus cereus G9842.</title>
        <authorList>
            <person name="Dodson R.J."/>
            <person name="Durkin A.S."/>
            <person name="Rosovitz M.J."/>
            <person name="Rasko D.A."/>
            <person name="Hoffmaster A."/>
            <person name="Ravel J."/>
            <person name="Sutton G."/>
        </authorList>
    </citation>
    <scope>NUCLEOTIDE SEQUENCE [LARGE SCALE GENOMIC DNA]</scope>
    <source>
        <strain>G9842</strain>
    </source>
</reference>
<evidence type="ECO:0000255" key="1">
    <source>
        <dbReference type="HAMAP-Rule" id="MF_00378"/>
    </source>
</evidence>
<comment type="function">
    <text evidence="1">Bidirectionally degrades single-stranded DNA into large acid-insoluble oligonucleotides, which are then degraded further into small acid-soluble oligonucleotides.</text>
</comment>
<comment type="catalytic activity">
    <reaction evidence="1">
        <text>Exonucleolytic cleavage in either 5'- to 3'- or 3'- to 5'-direction to yield nucleoside 5'-phosphates.</text>
        <dbReference type="EC" id="3.1.11.6"/>
    </reaction>
</comment>
<comment type="subunit">
    <text evidence="1">Heterooligomer composed of large and small subunits.</text>
</comment>
<comment type="subcellular location">
    <subcellularLocation>
        <location evidence="1">Cytoplasm</location>
    </subcellularLocation>
</comment>
<comment type="similarity">
    <text evidence="1">Belongs to the XseA family.</text>
</comment>
<sequence>MEKQYLTVTALTRYIKTKIEYDPHLQSVWLKGEISNFKNHSRGHMYFTLKDENARIAAVMFAGHNRNIKFKPENGMKVLVKGKISVYEASGSYQIYIQDMQPDGVGNLHLAYEQLKVRLEEEGLFSQVYKKAIPPYAKTIGVITSPTGAAIRDIITTIKRRYPIGNVIVFPVLVQGESAAPSIVQAIRTANEMGEIDVLIVGRGGGSIEELWAFNEEMVARAIFKSEIPIISAVGHETDFTIADFVADLRAPTPTAAAELAAPNIIELQEKVLQRTLRLQRAMRELVHKKEEKLQVLQKSYAFRYPRQVYEQKEEQLDRALEQLVLAKERYIDKKVNQLKQLSFYLEKHHPSQKIMQTKVAVETLQKQLQREMQTLLQTKEFAFVRAAQKLEALSPLKVMMRGYGLVYDEEKQVLKSVKDVSLGDAVSVQLQDGILDCSVSGIEERELNNGK</sequence>
<gene>
    <name evidence="1" type="primary">xseA</name>
    <name type="ordered locus">BCG9842_B0944</name>
</gene>
<accession>B7IXH1</accession>
<dbReference type="EC" id="3.1.11.6" evidence="1"/>
<dbReference type="EMBL" id="CP001186">
    <property type="protein sequence ID" value="ACK96888.1"/>
    <property type="molecule type" value="Genomic_DNA"/>
</dbReference>
<dbReference type="RefSeq" id="WP_000415249.1">
    <property type="nucleotide sequence ID" value="NC_011772.1"/>
</dbReference>
<dbReference type="SMR" id="B7IXH1"/>
<dbReference type="KEGG" id="bcg:BCG9842_B0944"/>
<dbReference type="HOGENOM" id="CLU_023625_3_1_9"/>
<dbReference type="Proteomes" id="UP000006744">
    <property type="component" value="Chromosome"/>
</dbReference>
<dbReference type="GO" id="GO:0005737">
    <property type="term" value="C:cytoplasm"/>
    <property type="evidence" value="ECO:0007669"/>
    <property type="project" value="UniProtKB-SubCell"/>
</dbReference>
<dbReference type="GO" id="GO:0009318">
    <property type="term" value="C:exodeoxyribonuclease VII complex"/>
    <property type="evidence" value="ECO:0007669"/>
    <property type="project" value="InterPro"/>
</dbReference>
<dbReference type="GO" id="GO:0008855">
    <property type="term" value="F:exodeoxyribonuclease VII activity"/>
    <property type="evidence" value="ECO:0007669"/>
    <property type="project" value="UniProtKB-UniRule"/>
</dbReference>
<dbReference type="GO" id="GO:0003676">
    <property type="term" value="F:nucleic acid binding"/>
    <property type="evidence" value="ECO:0007669"/>
    <property type="project" value="InterPro"/>
</dbReference>
<dbReference type="GO" id="GO:0006308">
    <property type="term" value="P:DNA catabolic process"/>
    <property type="evidence" value="ECO:0007669"/>
    <property type="project" value="UniProtKB-UniRule"/>
</dbReference>
<dbReference type="CDD" id="cd04489">
    <property type="entry name" value="ExoVII_LU_OBF"/>
    <property type="match status" value="1"/>
</dbReference>
<dbReference type="HAMAP" id="MF_00378">
    <property type="entry name" value="Exonuc_7_L"/>
    <property type="match status" value="1"/>
</dbReference>
<dbReference type="InterPro" id="IPR003753">
    <property type="entry name" value="Exonuc_VII_L"/>
</dbReference>
<dbReference type="InterPro" id="IPR020579">
    <property type="entry name" value="Exonuc_VII_lsu_C"/>
</dbReference>
<dbReference type="InterPro" id="IPR025824">
    <property type="entry name" value="OB-fold_nuc-bd_dom"/>
</dbReference>
<dbReference type="NCBIfam" id="TIGR00237">
    <property type="entry name" value="xseA"/>
    <property type="match status" value="1"/>
</dbReference>
<dbReference type="PANTHER" id="PTHR30008">
    <property type="entry name" value="EXODEOXYRIBONUCLEASE 7 LARGE SUBUNIT"/>
    <property type="match status" value="1"/>
</dbReference>
<dbReference type="PANTHER" id="PTHR30008:SF0">
    <property type="entry name" value="EXODEOXYRIBONUCLEASE 7 LARGE SUBUNIT"/>
    <property type="match status" value="1"/>
</dbReference>
<dbReference type="Pfam" id="PF02601">
    <property type="entry name" value="Exonuc_VII_L"/>
    <property type="match status" value="1"/>
</dbReference>
<dbReference type="Pfam" id="PF13742">
    <property type="entry name" value="tRNA_anti_2"/>
    <property type="match status" value="1"/>
</dbReference>
<keyword id="KW-0963">Cytoplasm</keyword>
<keyword id="KW-0269">Exonuclease</keyword>
<keyword id="KW-0378">Hydrolase</keyword>
<keyword id="KW-0540">Nuclease</keyword>
<name>EX7L_BACC2</name>